<proteinExistence type="inferred from homology"/>
<feature type="chain" id="PRO_1000189037" description="Cytochrome c-type biogenesis protein CcmE">
    <location>
        <begin position="1"/>
        <end position="166"/>
    </location>
</feature>
<feature type="topological domain" description="Cytoplasmic" evidence="1">
    <location>
        <begin position="1"/>
        <end position="7"/>
    </location>
</feature>
<feature type="transmembrane region" description="Helical; Signal-anchor for type II membrane protein" evidence="1">
    <location>
        <begin position="8"/>
        <end position="28"/>
    </location>
</feature>
<feature type="topological domain" description="Periplasmic" evidence="1">
    <location>
        <begin position="29"/>
        <end position="166"/>
    </location>
</feature>
<feature type="region of interest" description="Disordered" evidence="2">
    <location>
        <begin position="139"/>
        <end position="166"/>
    </location>
</feature>
<feature type="binding site" description="covalent" evidence="1">
    <location>
        <position position="122"/>
    </location>
    <ligand>
        <name>heme</name>
        <dbReference type="ChEBI" id="CHEBI:30413"/>
    </ligand>
</feature>
<feature type="binding site" description="axial binding residue" evidence="1">
    <location>
        <position position="126"/>
    </location>
    <ligand>
        <name>heme</name>
        <dbReference type="ChEBI" id="CHEBI:30413"/>
    </ligand>
    <ligandPart>
        <name>Fe</name>
        <dbReference type="ChEBI" id="CHEBI:18248"/>
    </ligandPart>
</feature>
<gene>
    <name evidence="1" type="primary">ccmE</name>
    <name evidence="1" type="synonym">cycJ</name>
    <name type="ordered locus">Msil_0437</name>
</gene>
<evidence type="ECO:0000255" key="1">
    <source>
        <dbReference type="HAMAP-Rule" id="MF_01959"/>
    </source>
</evidence>
<evidence type="ECO:0000256" key="2">
    <source>
        <dbReference type="SAM" id="MobiDB-lite"/>
    </source>
</evidence>
<keyword id="KW-0997">Cell inner membrane</keyword>
<keyword id="KW-1003">Cell membrane</keyword>
<keyword id="KW-0201">Cytochrome c-type biogenesis</keyword>
<keyword id="KW-0349">Heme</keyword>
<keyword id="KW-0408">Iron</keyword>
<keyword id="KW-0472">Membrane</keyword>
<keyword id="KW-0479">Metal-binding</keyword>
<keyword id="KW-1185">Reference proteome</keyword>
<keyword id="KW-0735">Signal-anchor</keyword>
<keyword id="KW-0812">Transmembrane</keyword>
<keyword id="KW-1133">Transmembrane helix</keyword>
<reference key="1">
    <citation type="journal article" date="2010" name="J. Bacteriol.">
        <title>Complete genome sequence of the aerobic facultative methanotroph Methylocella silvestris BL2.</title>
        <authorList>
            <person name="Chen Y."/>
            <person name="Crombie A."/>
            <person name="Rahman M.T."/>
            <person name="Dedysh S.N."/>
            <person name="Liesack W."/>
            <person name="Stott M.B."/>
            <person name="Alam M."/>
            <person name="Theisen A.R."/>
            <person name="Murrell J.C."/>
            <person name="Dunfield P.F."/>
        </authorList>
    </citation>
    <scope>NUCLEOTIDE SEQUENCE [LARGE SCALE GENOMIC DNA]</scope>
    <source>
        <strain>DSM 15510 / CIP 108128 / LMG 27833 / NCIMB 13906 / BL2</strain>
    </source>
</reference>
<sequence length="166" mass="17948">MTRKQKRLALIASGAVVVSLAVGLVMFALRDNIVFFYSPTELAEKPATNGARLRIGGLVKPASLDRQGDQTVRFTVTDMKHDVAVTYTGLLPDLFREGQGVVAEGALRPDGVFHADSVLAKHDERYMPREVADALKKQGVWQEEGKSEGKPSAIPAQTAPQGAQAY</sequence>
<organism>
    <name type="scientific">Methylocella silvestris (strain DSM 15510 / CIP 108128 / LMG 27833 / NCIMB 13906 / BL2)</name>
    <dbReference type="NCBI Taxonomy" id="395965"/>
    <lineage>
        <taxon>Bacteria</taxon>
        <taxon>Pseudomonadati</taxon>
        <taxon>Pseudomonadota</taxon>
        <taxon>Alphaproteobacteria</taxon>
        <taxon>Hyphomicrobiales</taxon>
        <taxon>Beijerinckiaceae</taxon>
        <taxon>Methylocella</taxon>
    </lineage>
</organism>
<protein>
    <recommendedName>
        <fullName evidence="1">Cytochrome c-type biogenesis protein CcmE</fullName>
    </recommendedName>
    <alternativeName>
        <fullName evidence="1">Cytochrome c maturation protein E</fullName>
    </alternativeName>
    <alternativeName>
        <fullName evidence="1">Heme chaperone CcmE</fullName>
    </alternativeName>
</protein>
<name>CCME_METSB</name>
<dbReference type="EMBL" id="CP001280">
    <property type="protein sequence ID" value="ACK49411.1"/>
    <property type="molecule type" value="Genomic_DNA"/>
</dbReference>
<dbReference type="RefSeq" id="WP_012589481.1">
    <property type="nucleotide sequence ID" value="NC_011666.1"/>
</dbReference>
<dbReference type="SMR" id="B8EJK7"/>
<dbReference type="STRING" id="395965.Msil_0437"/>
<dbReference type="KEGG" id="msl:Msil_0437"/>
<dbReference type="eggNOG" id="COG2332">
    <property type="taxonomic scope" value="Bacteria"/>
</dbReference>
<dbReference type="HOGENOM" id="CLU_079503_1_1_5"/>
<dbReference type="OrthoDB" id="9793584at2"/>
<dbReference type="Proteomes" id="UP000002257">
    <property type="component" value="Chromosome"/>
</dbReference>
<dbReference type="GO" id="GO:0005886">
    <property type="term" value="C:plasma membrane"/>
    <property type="evidence" value="ECO:0007669"/>
    <property type="project" value="UniProtKB-SubCell"/>
</dbReference>
<dbReference type="GO" id="GO:0020037">
    <property type="term" value="F:heme binding"/>
    <property type="evidence" value="ECO:0007669"/>
    <property type="project" value="InterPro"/>
</dbReference>
<dbReference type="GO" id="GO:0046872">
    <property type="term" value="F:metal ion binding"/>
    <property type="evidence" value="ECO:0007669"/>
    <property type="project" value="UniProtKB-KW"/>
</dbReference>
<dbReference type="GO" id="GO:0017004">
    <property type="term" value="P:cytochrome complex assembly"/>
    <property type="evidence" value="ECO:0007669"/>
    <property type="project" value="UniProtKB-KW"/>
</dbReference>
<dbReference type="FunFam" id="2.40.50.140:FF:000104">
    <property type="entry name" value="Cytochrome c-type biogenesis protein CcmE"/>
    <property type="match status" value="1"/>
</dbReference>
<dbReference type="Gene3D" id="2.40.50.140">
    <property type="entry name" value="Nucleic acid-binding proteins"/>
    <property type="match status" value="1"/>
</dbReference>
<dbReference type="HAMAP" id="MF_01959">
    <property type="entry name" value="CcmE"/>
    <property type="match status" value="1"/>
</dbReference>
<dbReference type="InterPro" id="IPR004329">
    <property type="entry name" value="CcmE"/>
</dbReference>
<dbReference type="InterPro" id="IPR036127">
    <property type="entry name" value="CcmE-like_sf"/>
</dbReference>
<dbReference type="InterPro" id="IPR012340">
    <property type="entry name" value="NA-bd_OB-fold"/>
</dbReference>
<dbReference type="NCBIfam" id="NF009727">
    <property type="entry name" value="PRK13254.1-1"/>
    <property type="match status" value="1"/>
</dbReference>
<dbReference type="NCBIfam" id="NF009729">
    <property type="entry name" value="PRK13254.1-3"/>
    <property type="match status" value="1"/>
</dbReference>
<dbReference type="NCBIfam" id="NF009731">
    <property type="entry name" value="PRK13254.1-5"/>
    <property type="match status" value="1"/>
</dbReference>
<dbReference type="PANTHER" id="PTHR34128">
    <property type="entry name" value="CYTOCHROME C-TYPE BIOGENESIS PROTEIN CCME HOMOLOG, MITOCHONDRIAL"/>
    <property type="match status" value="1"/>
</dbReference>
<dbReference type="PANTHER" id="PTHR34128:SF2">
    <property type="entry name" value="CYTOCHROME C-TYPE BIOGENESIS PROTEIN CCME HOMOLOG, MITOCHONDRIAL"/>
    <property type="match status" value="1"/>
</dbReference>
<dbReference type="Pfam" id="PF03100">
    <property type="entry name" value="CcmE"/>
    <property type="match status" value="1"/>
</dbReference>
<dbReference type="SUPFAM" id="SSF82093">
    <property type="entry name" value="Heme chaperone CcmE"/>
    <property type="match status" value="1"/>
</dbReference>
<comment type="function">
    <text evidence="1">Heme chaperone required for the biogenesis of c-type cytochromes. Transiently binds heme delivered by CcmC and transfers the heme to apo-cytochromes in a process facilitated by CcmF and CcmH.</text>
</comment>
<comment type="subcellular location">
    <subcellularLocation>
        <location evidence="1">Cell inner membrane</location>
        <topology evidence="1">Single-pass type II membrane protein</topology>
        <orientation evidence="1">Periplasmic side</orientation>
    </subcellularLocation>
</comment>
<comment type="similarity">
    <text evidence="1">Belongs to the CcmE/CycJ family.</text>
</comment>
<accession>B8EJK7</accession>